<evidence type="ECO:0000255" key="1"/>
<evidence type="ECO:0000255" key="2">
    <source>
        <dbReference type="PROSITE-ProRule" id="PRU00316"/>
    </source>
</evidence>
<evidence type="ECO:0000256" key="3">
    <source>
        <dbReference type="SAM" id="MobiDB-lite"/>
    </source>
</evidence>
<evidence type="ECO:0000269" key="4">
    <source>
    </source>
</evidence>
<evidence type="ECO:0000269" key="5">
    <source>
    </source>
</evidence>
<evidence type="ECO:0000269" key="6">
    <source>
    </source>
</evidence>
<evidence type="ECO:0000269" key="7">
    <source>
    </source>
</evidence>
<evidence type="ECO:0000269" key="8">
    <source>
    </source>
</evidence>
<evidence type="ECO:0000269" key="9">
    <source>
    </source>
</evidence>
<evidence type="ECO:0000269" key="10">
    <source>
    </source>
</evidence>
<evidence type="ECO:0000269" key="11">
    <source ref="3"/>
</evidence>
<evidence type="ECO:0000303" key="12">
    <source>
    </source>
</evidence>
<evidence type="ECO:0000303" key="13">
    <source>
    </source>
</evidence>
<evidence type="ECO:0000305" key="14"/>
<proteinExistence type="evidence at protein level"/>
<feature type="signal peptide" evidence="1">
    <location>
        <begin position="1"/>
        <end position="23"/>
    </location>
</feature>
<feature type="chain" id="PRO_0000010920" description="Interleukin-12 receptor subunit beta-2">
    <location>
        <begin position="24"/>
        <end position="862"/>
    </location>
</feature>
<feature type="topological domain" description="Extracellular" evidence="1">
    <location>
        <begin position="24"/>
        <end position="622"/>
    </location>
</feature>
<feature type="transmembrane region" description="Helical" evidence="1">
    <location>
        <begin position="623"/>
        <end position="643"/>
    </location>
</feature>
<feature type="topological domain" description="Cytoplasmic" evidence="1">
    <location>
        <begin position="644"/>
        <end position="862"/>
    </location>
</feature>
<feature type="domain" description="Fibronectin type-III 1" evidence="2">
    <location>
        <begin position="126"/>
        <end position="221"/>
    </location>
</feature>
<feature type="domain" description="Fibronectin type-III 2" evidence="2">
    <location>
        <begin position="226"/>
        <end position="319"/>
    </location>
</feature>
<feature type="domain" description="Fibronectin type-III 3" evidence="2">
    <location>
        <begin position="320"/>
        <end position="419"/>
    </location>
</feature>
<feature type="domain" description="Fibronectin type-III 4" evidence="2">
    <location>
        <begin position="423"/>
        <end position="520"/>
    </location>
</feature>
<feature type="domain" description="Fibronectin type-III 5" evidence="2">
    <location>
        <begin position="521"/>
        <end position="620"/>
    </location>
</feature>
<feature type="region of interest" description="Disordered" evidence="3">
    <location>
        <begin position="725"/>
        <end position="755"/>
    </location>
</feature>
<feature type="region of interest" description="Required for STAT4 binding">
    <location>
        <begin position="796"/>
        <end position="801"/>
    </location>
</feature>
<feature type="short sequence motif" description="WSXWS motif">
    <location>
        <begin position="305"/>
        <end position="309"/>
    </location>
</feature>
<feature type="short sequence motif" description="Box 1 motif">
    <location>
        <begin position="662"/>
        <end position="670"/>
    </location>
</feature>
<feature type="compositionally biased region" description="Basic and acidic residues" evidence="3">
    <location>
        <begin position="728"/>
        <end position="744"/>
    </location>
</feature>
<feature type="modified residue" description="Phosphotyrosine" evidence="5">
    <location>
        <position position="800"/>
    </location>
</feature>
<feature type="glycosylation site" description="N-linked (GlcNAc...) asparagine" evidence="1">
    <location>
        <position position="48"/>
    </location>
</feature>
<feature type="glycosylation site" description="N-linked (GlcNAc...) asparagine" evidence="1">
    <location>
        <position position="129"/>
    </location>
</feature>
<feature type="glycosylation site" description="N-linked (GlcNAc...) asparagine" evidence="1">
    <location>
        <position position="166"/>
    </location>
</feature>
<feature type="glycosylation site" description="N-linked (GlcNAc...) asparagine" evidence="1">
    <location>
        <position position="195"/>
    </location>
</feature>
<feature type="glycosylation site" description="N-linked (GlcNAc...) asparagine" evidence="1">
    <location>
        <position position="271"/>
    </location>
</feature>
<feature type="glycosylation site" description="N-linked (GlcNAc...) asparagine" evidence="1">
    <location>
        <position position="347"/>
    </location>
</feature>
<feature type="glycosylation site" description="N-linked (GlcNAc...) asparagine" evidence="1">
    <location>
        <position position="376"/>
    </location>
</feature>
<feature type="glycosylation site" description="N-linked (GlcNAc...) asparagine" evidence="1">
    <location>
        <position position="480"/>
    </location>
</feature>
<feature type="splice variant" id="VSP_044784" description="In isoform 3." evidence="13">
    <location>
        <begin position="487"/>
        <end position="572"/>
    </location>
</feature>
<feature type="splice variant" id="VSP_011112" description="In isoform 2." evidence="12">
    <original>VFVLLAALRP</original>
    <variation>RRHSCPWTGS</variation>
    <location>
        <begin position="650"/>
        <end position="659"/>
    </location>
</feature>
<feature type="splice variant" id="VSP_011113" description="In isoform 2." evidence="12">
    <location>
        <begin position="660"/>
        <end position="862"/>
    </location>
</feature>
<feature type="sequence variant" id="VAR_021278" description="In dbSNP:rs17129772." evidence="11">
    <original>M</original>
    <variation>V</variation>
    <location>
        <position position="13"/>
    </location>
</feature>
<feature type="sequence variant" id="VAR_021279" description="In dbSNP:rs17129792." evidence="11">
    <original>R</original>
    <variation>Q</variation>
    <location>
        <position position="149"/>
    </location>
</feature>
<feature type="sequence variant" id="VAR_014805" description="In dbSNP:rs2307146.">
    <original>I</original>
    <variation>V</variation>
    <location>
        <position position="185"/>
    </location>
</feature>
<feature type="sequence variant" id="VAR_019525" description="In dbSNP:rs7526769.">
    <original>T</original>
    <variation>I</variation>
    <location>
        <position position="201"/>
    </location>
</feature>
<feature type="sequence variant" id="VAR_019526" evidence="6">
    <original>R</original>
    <variation>G</variation>
    <location>
        <position position="313"/>
    </location>
</feature>
<feature type="sequence variant" id="VAR_014806" description="In dbSNP:rs2307148.">
    <original>G</original>
    <variation>R</variation>
    <location>
        <position position="420"/>
    </location>
</feature>
<feature type="sequence variant" id="VAR_049169" description="In dbSNP:rs2307148.">
    <original>G</original>
    <variation>S</variation>
    <location>
        <position position="420"/>
    </location>
</feature>
<feature type="sequence variant" id="VAR_014807" description="In dbSNP:rs2307145." evidence="8 11">
    <original>Q</original>
    <variation>H</variation>
    <location>
        <position position="426"/>
    </location>
</feature>
<feature type="sequence variant" id="VAR_014808" description="In dbSNP:rs2307153." evidence="11">
    <original>G</original>
    <variation>D</variation>
    <location>
        <position position="465"/>
    </location>
</feature>
<feature type="sequence variant" id="VAR_016097" description="In dbSNP:rs2307154.">
    <original>A</original>
    <variation>V</variation>
    <location>
        <position position="625"/>
    </location>
</feature>
<feature type="sequence variant" id="VAR_019527" description="In dbSNP:rs1242019108." evidence="6">
    <original>H</original>
    <variation>R</variation>
    <location>
        <position position="720"/>
    </location>
</feature>
<feature type="sequence variant" id="VAR_021280" description="In dbSNP:rs17838066." evidence="11">
    <original>L</original>
    <variation>R</variation>
    <location>
        <position position="808"/>
    </location>
</feature>
<feature type="mutagenesis site" description="No loss of STAT4 activation. No loss of SOCS3 binding." evidence="4 7 10">
    <original>Y</original>
    <variation>F</variation>
    <location>
        <position position="678"/>
    </location>
</feature>
<feature type="mutagenesis site" description="No loss of STAT4 activation. No loss of SOCS3 binding." evidence="4 7 10">
    <original>Y</original>
    <variation>F</variation>
    <location>
        <position position="767"/>
    </location>
</feature>
<feature type="mutagenesis site" description="Loss of STAT4 activation. Abolishes SOCS3 binding." evidence="4 7 10">
    <original>Y</original>
    <variation>F</variation>
    <location>
        <position position="800"/>
    </location>
</feature>
<feature type="mutagenesis site" description="Abolishes in vitro STAT4 binding to a phosphorylated Y-800 peptide." evidence="5">
    <original>L</original>
    <variation>A</variation>
    <location>
        <position position="801"/>
    </location>
</feature>
<feature type="mutagenesis site" description="No effect on in vitro STAT4 binding to a phosphorylated Y-800 peptide." evidence="5">
    <original>P</original>
    <variation>A</variation>
    <location>
        <position position="802"/>
    </location>
</feature>
<feature type="mutagenesis site" description="No effect on in vitro STAT4 binding to a phosphorylated Y-800 peptide." evidence="5">
    <original>S</original>
    <variation>A</variation>
    <location>
        <position position="803"/>
    </location>
</feature>
<feature type="mutagenesis site" description="No effect on in vitro STAT4 binding to a phosphorylated Y-800 peptide." evidence="5">
    <original>N</original>
    <variation>A</variation>
    <location>
        <position position="804"/>
    </location>
</feature>
<reference key="1">
    <citation type="journal article" date="1996" name="Proc. Natl. Acad. Sci. U.S.A.">
        <title>A functional interleukin 12 receptor complex is composed of two beta-type cytokine receptor subunits.</title>
        <authorList>
            <person name="Presky D.H."/>
            <person name="Yang H."/>
            <person name="Minetti L.J."/>
            <person name="Chua A.O."/>
            <person name="Nabavi N."/>
            <person name="Wu C.-Y."/>
            <person name="Gately M.K."/>
            <person name="Gubler U."/>
        </authorList>
    </citation>
    <scope>NUCLEOTIDE SEQUENCE [MRNA] (ISOFORM 1)</scope>
</reference>
<reference key="2">
    <citation type="journal article" date="2000" name="Immunogenetics">
        <title>Genomic organization of the human interleukin-12 receptor beta2-chain gene.</title>
        <authorList>
            <person name="van Rietschoten J.G.I."/>
            <person name="Smits H.H."/>
            <person name="Westland R."/>
            <person name="Verweij C.L."/>
            <person name="den Hartog M.T."/>
            <person name="Wierenga E.A."/>
        </authorList>
    </citation>
    <scope>NUCLEOTIDE SEQUENCE [MRNA] (ISOFORM 2)</scope>
    <source>
        <tissue>T-cell</tissue>
    </source>
</reference>
<reference key="3">
    <citation type="submission" date="2004-05" db="EMBL/GenBank/DDBJ databases">
        <authorList>
            <consortium name="SeattleSNPs variation discovery resource"/>
        </authorList>
    </citation>
    <scope>NUCLEOTIDE SEQUENCE [GENOMIC DNA]</scope>
    <scope>VARIANTS VAL-13; GLN-149; HIS-426; ASP-465 AND ARG-808</scope>
</reference>
<reference key="4">
    <citation type="journal article" date="2006" name="Nature">
        <title>The DNA sequence and biological annotation of human chromosome 1.</title>
        <authorList>
            <person name="Gregory S.G."/>
            <person name="Barlow K.F."/>
            <person name="McLay K.E."/>
            <person name="Kaul R."/>
            <person name="Swarbreck D."/>
            <person name="Dunham A."/>
            <person name="Scott C.E."/>
            <person name="Howe K.L."/>
            <person name="Woodfine K."/>
            <person name="Spencer C.C.A."/>
            <person name="Jones M.C."/>
            <person name="Gillson C."/>
            <person name="Searle S."/>
            <person name="Zhou Y."/>
            <person name="Kokocinski F."/>
            <person name="McDonald L."/>
            <person name="Evans R."/>
            <person name="Phillips K."/>
            <person name="Atkinson A."/>
            <person name="Cooper R."/>
            <person name="Jones C."/>
            <person name="Hall R.E."/>
            <person name="Andrews T.D."/>
            <person name="Lloyd C."/>
            <person name="Ainscough R."/>
            <person name="Almeida J.P."/>
            <person name="Ambrose K.D."/>
            <person name="Anderson F."/>
            <person name="Andrew R.W."/>
            <person name="Ashwell R.I.S."/>
            <person name="Aubin K."/>
            <person name="Babbage A.K."/>
            <person name="Bagguley C.L."/>
            <person name="Bailey J."/>
            <person name="Beasley H."/>
            <person name="Bethel G."/>
            <person name="Bird C.P."/>
            <person name="Bray-Allen S."/>
            <person name="Brown J.Y."/>
            <person name="Brown A.J."/>
            <person name="Buckley D."/>
            <person name="Burton J."/>
            <person name="Bye J."/>
            <person name="Carder C."/>
            <person name="Chapman J.C."/>
            <person name="Clark S.Y."/>
            <person name="Clarke G."/>
            <person name="Clee C."/>
            <person name="Cobley V."/>
            <person name="Collier R.E."/>
            <person name="Corby N."/>
            <person name="Coville G.J."/>
            <person name="Davies J."/>
            <person name="Deadman R."/>
            <person name="Dunn M."/>
            <person name="Earthrowl M."/>
            <person name="Ellington A.G."/>
            <person name="Errington H."/>
            <person name="Frankish A."/>
            <person name="Frankland J."/>
            <person name="French L."/>
            <person name="Garner P."/>
            <person name="Garnett J."/>
            <person name="Gay L."/>
            <person name="Ghori M.R.J."/>
            <person name="Gibson R."/>
            <person name="Gilby L.M."/>
            <person name="Gillett W."/>
            <person name="Glithero R.J."/>
            <person name="Grafham D.V."/>
            <person name="Griffiths C."/>
            <person name="Griffiths-Jones S."/>
            <person name="Grocock R."/>
            <person name="Hammond S."/>
            <person name="Harrison E.S.I."/>
            <person name="Hart E."/>
            <person name="Haugen E."/>
            <person name="Heath P.D."/>
            <person name="Holmes S."/>
            <person name="Holt K."/>
            <person name="Howden P.J."/>
            <person name="Hunt A.R."/>
            <person name="Hunt S.E."/>
            <person name="Hunter G."/>
            <person name="Isherwood J."/>
            <person name="James R."/>
            <person name="Johnson C."/>
            <person name="Johnson D."/>
            <person name="Joy A."/>
            <person name="Kay M."/>
            <person name="Kershaw J.K."/>
            <person name="Kibukawa M."/>
            <person name="Kimberley A.M."/>
            <person name="King A."/>
            <person name="Knights A.J."/>
            <person name="Lad H."/>
            <person name="Laird G."/>
            <person name="Lawlor S."/>
            <person name="Leongamornlert D.A."/>
            <person name="Lloyd D.M."/>
            <person name="Loveland J."/>
            <person name="Lovell J."/>
            <person name="Lush M.J."/>
            <person name="Lyne R."/>
            <person name="Martin S."/>
            <person name="Mashreghi-Mohammadi M."/>
            <person name="Matthews L."/>
            <person name="Matthews N.S.W."/>
            <person name="McLaren S."/>
            <person name="Milne S."/>
            <person name="Mistry S."/>
            <person name="Moore M.J.F."/>
            <person name="Nickerson T."/>
            <person name="O'Dell C.N."/>
            <person name="Oliver K."/>
            <person name="Palmeiri A."/>
            <person name="Palmer S.A."/>
            <person name="Parker A."/>
            <person name="Patel D."/>
            <person name="Pearce A.V."/>
            <person name="Peck A.I."/>
            <person name="Pelan S."/>
            <person name="Phelps K."/>
            <person name="Phillimore B.J."/>
            <person name="Plumb R."/>
            <person name="Rajan J."/>
            <person name="Raymond C."/>
            <person name="Rouse G."/>
            <person name="Saenphimmachak C."/>
            <person name="Sehra H.K."/>
            <person name="Sheridan E."/>
            <person name="Shownkeen R."/>
            <person name="Sims S."/>
            <person name="Skuce C.D."/>
            <person name="Smith M."/>
            <person name="Steward C."/>
            <person name="Subramanian S."/>
            <person name="Sycamore N."/>
            <person name="Tracey A."/>
            <person name="Tromans A."/>
            <person name="Van Helmond Z."/>
            <person name="Wall M."/>
            <person name="Wallis J.M."/>
            <person name="White S."/>
            <person name="Whitehead S.L."/>
            <person name="Wilkinson J.E."/>
            <person name="Willey D.L."/>
            <person name="Williams H."/>
            <person name="Wilming L."/>
            <person name="Wray P.W."/>
            <person name="Wu Z."/>
            <person name="Coulson A."/>
            <person name="Vaudin M."/>
            <person name="Sulston J.E."/>
            <person name="Durbin R.M."/>
            <person name="Hubbard T."/>
            <person name="Wooster R."/>
            <person name="Dunham I."/>
            <person name="Carter N.P."/>
            <person name="McVean G."/>
            <person name="Ross M.T."/>
            <person name="Harrow J."/>
            <person name="Olson M.V."/>
            <person name="Beck S."/>
            <person name="Rogers J."/>
            <person name="Bentley D.R."/>
        </authorList>
    </citation>
    <scope>NUCLEOTIDE SEQUENCE [LARGE SCALE GENOMIC DNA]</scope>
</reference>
<reference key="5">
    <citation type="submission" date="2005-09" db="EMBL/GenBank/DDBJ databases">
        <authorList>
            <person name="Mural R.J."/>
            <person name="Istrail S."/>
            <person name="Sutton G.G."/>
            <person name="Florea L."/>
            <person name="Halpern A.L."/>
            <person name="Mobarry C.M."/>
            <person name="Lippert R."/>
            <person name="Walenz B."/>
            <person name="Shatkay H."/>
            <person name="Dew I."/>
            <person name="Miller J.R."/>
            <person name="Flanigan M.J."/>
            <person name="Edwards N.J."/>
            <person name="Bolanos R."/>
            <person name="Fasulo D."/>
            <person name="Halldorsson B.V."/>
            <person name="Hannenhalli S."/>
            <person name="Turner R."/>
            <person name="Yooseph S."/>
            <person name="Lu F."/>
            <person name="Nusskern D.R."/>
            <person name="Shue B.C."/>
            <person name="Zheng X.H."/>
            <person name="Zhong F."/>
            <person name="Delcher A.L."/>
            <person name="Huson D.H."/>
            <person name="Kravitz S.A."/>
            <person name="Mouchard L."/>
            <person name="Reinert K."/>
            <person name="Remington K.A."/>
            <person name="Clark A.G."/>
            <person name="Waterman M.S."/>
            <person name="Eichler E.E."/>
            <person name="Adams M.D."/>
            <person name="Hunkapiller M.W."/>
            <person name="Myers E.W."/>
            <person name="Venter J.C."/>
        </authorList>
    </citation>
    <scope>NUCLEOTIDE SEQUENCE [LARGE SCALE GENOMIC DNA]</scope>
</reference>
<reference key="6">
    <citation type="journal article" date="2004" name="Genome Res.">
        <title>The status, quality, and expansion of the NIH full-length cDNA project: the Mammalian Gene Collection (MGC).</title>
        <authorList>
            <consortium name="The MGC Project Team"/>
        </authorList>
    </citation>
    <scope>NUCLEOTIDE SEQUENCE [LARGE SCALE MRNA] (ISOFORMS 1 AND 3)</scope>
    <scope>VARIANT HIS-426</scope>
    <source>
        <tissue>Brain</tissue>
    </source>
</reference>
<reference key="7">
    <citation type="journal article" date="1999" name="Arch. Biochem. Biophys.">
        <title>Direct interaction of STAT4 with the IL-12 receptor.</title>
        <authorList>
            <person name="Yao B.B."/>
            <person name="Niu P."/>
            <person name="Surowy C.S."/>
            <person name="Faltynek C.R."/>
        </authorList>
    </citation>
    <scope>INTERACTION WITH STAT4</scope>
    <scope>PHOSPHORYLATION AT TYR-800</scope>
    <scope>MUTAGENESIS OF LEU-801; PRO-802; SER-803 AND ASN-804</scope>
</reference>
<reference key="8">
    <citation type="journal article" date="1999" name="Biochem. Biophys. Res. Commun.">
        <title>Physical interaction between interleukin-12 receptor beta 2 subunit and Jak2 tyrosine kinase: Jak2 associates with cytoplasmic membrane-proximal region of interleukin-12 receptor beta 2 via amino-terminus.</title>
        <authorList>
            <person name="Yamamoto K."/>
            <person name="Shibata F."/>
            <person name="Miura O."/>
            <person name="Kamiyama R."/>
            <person name="Hirosawa S."/>
            <person name="Miyasaka N."/>
        </authorList>
    </citation>
    <scope>INTERACTION WITH JAK2</scope>
    <scope>MUTAGENESIS OF TYR-678; TYR-767 AND TYR-800</scope>
</reference>
<reference key="9">
    <citation type="journal article" date="1999" name="J. Biol. Chem.">
        <title>Identification of a STAT4 binding site in the interleukin-12 receptor required for signaling.</title>
        <authorList>
            <person name="Naeger L.K."/>
            <person name="McKinney J."/>
            <person name="Salvekar A."/>
            <person name="Hoey T."/>
        </authorList>
    </citation>
    <scope>INTERACTION WITH STAT4</scope>
    <scope>MUTAGENESIS OF TYR-678; TYR-767 AND TYR-800</scope>
</reference>
<reference key="10">
    <citation type="journal article" date="1997" name="J. Exp. Med.">
        <title>Selective expression of an interleukin-12 receptor component by human T helper 1 cells.</title>
        <authorList>
            <person name="Rogge L."/>
            <person name="Barberis-Maino L."/>
            <person name="Biffi M."/>
            <person name="Passini N."/>
            <person name="Presky D.H."/>
            <person name="Gubler U."/>
            <person name="Sinigaglia F."/>
        </authorList>
    </citation>
    <scope>TISSUE SPECIFICITY</scope>
    <scope>INDUCTION</scope>
</reference>
<reference key="11">
    <citation type="journal article" date="2003" name="Biochem. Biophys. Res. Commun.">
        <title>SOCS-3 inhibits IL-12-induced STAT4 activation by binding through its SH2 domain to the STAT4 docking site in the IL-12 receptor beta2 subunit.</title>
        <authorList>
            <person name="Yamamoto K."/>
            <person name="Yamaguchi M."/>
            <person name="Miyasaka N."/>
            <person name="Miura O."/>
        </authorList>
    </citation>
    <scope>PHOSPHORYLATION</scope>
    <scope>INTERACTION WITH SOCS3</scope>
    <scope>MUTAGENESIS OF TYR-678; TYR-767 AND TYR-800</scope>
</reference>
<reference key="12">
    <citation type="journal article" date="1999" name="Biochem. Biophys. Res. Commun.">
        <title>Mutations of the IL-12 receptor beta2 chain gene in atopic subjects.</title>
        <authorList>
            <person name="Matsui E."/>
            <person name="Kaneko H."/>
            <person name="Fukao T."/>
            <person name="Teramoto T."/>
            <person name="Inoue R."/>
            <person name="Watanabe M."/>
            <person name="Kasahara K."/>
            <person name="Kondo N."/>
        </authorList>
    </citation>
    <scope>VARIANTS GLY-313 AND ARG-720</scope>
</reference>
<name>I12R2_HUMAN</name>
<gene>
    <name type="primary">IL12RB2</name>
</gene>
<organism>
    <name type="scientific">Homo sapiens</name>
    <name type="common">Human</name>
    <dbReference type="NCBI Taxonomy" id="9606"/>
    <lineage>
        <taxon>Eukaryota</taxon>
        <taxon>Metazoa</taxon>
        <taxon>Chordata</taxon>
        <taxon>Craniata</taxon>
        <taxon>Vertebrata</taxon>
        <taxon>Euteleostomi</taxon>
        <taxon>Mammalia</taxon>
        <taxon>Eutheria</taxon>
        <taxon>Euarchontoglires</taxon>
        <taxon>Primates</taxon>
        <taxon>Haplorrhini</taxon>
        <taxon>Catarrhini</taxon>
        <taxon>Hominidae</taxon>
        <taxon>Homo</taxon>
    </lineage>
</organism>
<sequence>MAHTFRGCSLAFMFIITWLLIKAKIDACKRGDVTVKPSHVILLGSTVNITCSLKPRQGCFHYSRRNKLILYKFDRRINFHHGHSLNSQVTGLPLGTTLFVCKLACINSDEIQICGAEIFVGVAPEQPQNLSCIQKGEQGTVACTWERGRDTHLYTEYTLQLSGPKNLTWQKQCKDIYCDYLDFGINLTPESPESNFTAKVTAVNSLGSSSSLPSTFTFLDIVRPLPPWDIRIKFQKASVSRCTLYWRDEGLVLLNRLRYRPSNSRLWNMVNVTKAKGRHDLLDLKPFTEYEFQISSKLHLYKGSWSDWSESLRAQTPEEEPTGMLDVWYMKRHIDYSRQQISLFWKNLSVSEARGKILHYQVTLQELTGGKAMTQNITGHTSWTTVIPRTGNWAVAVSAANSKGSSLPTRINIMNLCEAGLLAPRQVSANSEGMDNILVTWQPPRKDPSAVQEYVVEWRELHPGGDTQVPLNWLRSRPYNVSALISENIKSYICYEIRVYALSGDQGGCSSILGNSKHKAPLSGPHINAITEEKGSILISWNSIPVQEQMGCLLHYRIYWKERDSNSQPQLCEIPYRVSQNSHPINSLQPRVTYVLWMTALTAAGESSHGNEREFCLQGKANWMAFVAPSICIAIIMVGIFSTHYFQQKVFVLLAALRPQWCSREIPDPANSTCAKKYPIAEEKTQLPLDRLLIDWPTPEDPEPLVISEVLHQVTPVFRHPPCSNWPQREKGIQGHQASEKDMMHSASSPPPPRALQAESRQLVDLYKVLESRGSDPKPENPACPWTVLPAGDLPTHDGYLPSNIDDLPSHEAPLADSLEELEPQHISLSVFPSSSLHPLTFSCGDKLTLDQLKMRCDSLML</sequence>
<protein>
    <recommendedName>
        <fullName>Interleukin-12 receptor subunit beta-2</fullName>
        <shortName>IL-12 receptor subunit beta-2</shortName>
        <shortName>IL-12R subunit beta-2</shortName>
        <shortName>IL-12R-beta-2</shortName>
        <shortName>IL-12RB2</shortName>
    </recommendedName>
</protein>
<keyword id="KW-0002">3D-structure</keyword>
<keyword id="KW-0025">Alternative splicing</keyword>
<keyword id="KW-1015">Disulfide bond</keyword>
<keyword id="KW-0325">Glycoprotein</keyword>
<keyword id="KW-0472">Membrane</keyword>
<keyword id="KW-0597">Phosphoprotein</keyword>
<keyword id="KW-1267">Proteomics identification</keyword>
<keyword id="KW-0675">Receptor</keyword>
<keyword id="KW-1185">Reference proteome</keyword>
<keyword id="KW-0677">Repeat</keyword>
<keyword id="KW-0732">Signal</keyword>
<keyword id="KW-0812">Transmembrane</keyword>
<keyword id="KW-1133">Transmembrane helix</keyword>
<comment type="function">
    <text>Receptor for interleukin-12. This subunit is the signaling component coupling to the JAK2/STAT4 pathway. Promotes the proliferation of T-cells as well as NK cells. Induces the promotion of T-cells towards the Th1 phenotype by strongly enhancing IFN-gamma production.</text>
</comment>
<comment type="subunit">
    <text>Heterodimer/heterooligomer; disulfide-linked. The functional high affinity IL12 receptor is composed of I12RB1 and IL12RB2. Il12RB2 binds JAK2 (via its N-terminal) through a membrane-proximal region of the cytoplasmic domain. Interaction, in vitro and in vivo, with SOCS3 (via its SH2 domain) inhibits the STAT4-mediated activation. Binds STAT4 through a membrane-distal C-terminal region.</text>
</comment>
<comment type="subcellular location">
    <subcellularLocation>
        <location>Membrane</location>
        <topology>Single-pass type I membrane protein</topology>
    </subcellularLocation>
</comment>
<comment type="alternative products">
    <event type="alternative splicing"/>
    <isoform>
        <id>Q99665-1</id>
        <name>1</name>
        <sequence type="displayed"/>
    </isoform>
    <isoform>
        <id>Q99665-2</id>
        <name>2</name>
        <sequence type="described" ref="VSP_011112 VSP_011113"/>
    </isoform>
    <isoform>
        <id>Q99665-3</id>
        <name>3</name>
        <sequence type="described" ref="VSP_044784"/>
    </isoform>
</comment>
<comment type="tissue specificity">
    <text evidence="9">Isoform 2 is expressed at similar levels in both naive and activated T-cells.</text>
</comment>
<comment type="developmental stage">
    <text>Maximum levels in Th1 cells between day 3 and day 8 of activation.</text>
</comment>
<comment type="induction">
    <text evidence="9">In vitro, up-regulated by IFN-alpha.</text>
</comment>
<comment type="domain">
    <text>The WSXWS motif appears to be necessary for proper protein folding and thereby efficient intracellular transport and cell-surface receptor binding.</text>
</comment>
<comment type="domain">
    <text>The box 1 motif is required for JAK interaction and/or activation.</text>
</comment>
<comment type="PTM">
    <text evidence="5 7">On IL12 binding, phosphorylated on C-terminal tyrosine residues by JAK2. Phosphorylation on Tyr-800 is required for STAT4 binding and activation, and for SOCS3 binding.</text>
</comment>
<comment type="polymorphism">
    <text>Heterozygotic variants Gly-313 and Arg-720 are associated with atopy, an immunological condition that can lead to clinical symptoms such as allergic rhinitis, sinusitis, asthma and eczema.</text>
</comment>
<comment type="similarity">
    <text evidence="14">Belongs to the type I cytokine receptor family. Type 2 subfamily.</text>
</comment>
<dbReference type="EMBL" id="U64198">
    <property type="protein sequence ID" value="AAB36675.1"/>
    <property type="molecule type" value="mRNA"/>
</dbReference>
<dbReference type="EMBL" id="AY640177">
    <property type="protein sequence ID" value="AAT45456.1"/>
    <property type="molecule type" value="Genomic_DNA"/>
</dbReference>
<dbReference type="EMBL" id="CH471059">
    <property type="protein sequence ID" value="EAX06499.1"/>
    <property type="molecule type" value="Genomic_DNA"/>
</dbReference>
<dbReference type="EMBL" id="AL358512">
    <property type="status" value="NOT_ANNOTATED_CDS"/>
    <property type="molecule type" value="Genomic_DNA"/>
</dbReference>
<dbReference type="EMBL" id="AL389925">
    <property type="status" value="NOT_ANNOTATED_CDS"/>
    <property type="molecule type" value="Genomic_DNA"/>
</dbReference>
<dbReference type="EMBL" id="BC104772">
    <property type="protein sequence ID" value="AAI04773.1"/>
    <property type="molecule type" value="mRNA"/>
</dbReference>
<dbReference type="EMBL" id="BC104774">
    <property type="protein sequence ID" value="AAI04775.1"/>
    <property type="molecule type" value="mRNA"/>
</dbReference>
<dbReference type="EMBL" id="BC143249">
    <property type="protein sequence ID" value="AAI43250.1"/>
    <property type="molecule type" value="mRNA"/>
</dbReference>
<dbReference type="CCDS" id="CCDS58006.1">
    <molecule id="Q99665-2"/>
</dbReference>
<dbReference type="CCDS" id="CCDS58007.1">
    <molecule id="Q99665-3"/>
</dbReference>
<dbReference type="CCDS" id="CCDS638.1">
    <molecule id="Q99665-1"/>
</dbReference>
<dbReference type="RefSeq" id="NP_001245143.1">
    <molecule id="Q99665-2"/>
    <property type="nucleotide sequence ID" value="NM_001258214.1"/>
</dbReference>
<dbReference type="RefSeq" id="NP_001245144.1">
    <molecule id="Q99665-3"/>
    <property type="nucleotide sequence ID" value="NM_001258215.1"/>
</dbReference>
<dbReference type="RefSeq" id="NP_001245145.1">
    <property type="nucleotide sequence ID" value="NM_001258216.1"/>
</dbReference>
<dbReference type="RefSeq" id="NP_001306162.1">
    <molecule id="Q99665-2"/>
    <property type="nucleotide sequence ID" value="NM_001319233.1"/>
</dbReference>
<dbReference type="RefSeq" id="NP_001361188.1">
    <molecule id="Q99665-1"/>
    <property type="nucleotide sequence ID" value="NM_001374259.2"/>
</dbReference>
<dbReference type="RefSeq" id="NP_001550.1">
    <molecule id="Q99665-1"/>
    <property type="nucleotide sequence ID" value="NM_001559.3"/>
</dbReference>
<dbReference type="RefSeq" id="XP_005270882.1">
    <property type="nucleotide sequence ID" value="XM_005270825.2"/>
</dbReference>
<dbReference type="RefSeq" id="XP_005270884.1">
    <molecule id="Q99665-1"/>
    <property type="nucleotide sequence ID" value="XM_005270827.3"/>
</dbReference>
<dbReference type="RefSeq" id="XP_005270885.1">
    <molecule id="Q99665-1"/>
    <property type="nucleotide sequence ID" value="XM_005270828.4"/>
</dbReference>
<dbReference type="RefSeq" id="XP_006710680.1">
    <molecule id="Q99665-3"/>
    <property type="nucleotide sequence ID" value="XM_006710617.3"/>
</dbReference>
<dbReference type="RefSeq" id="XP_011539685.1">
    <molecule id="Q99665-1"/>
    <property type="nucleotide sequence ID" value="XM_011541383.3"/>
</dbReference>
<dbReference type="RefSeq" id="XP_016856692.1">
    <molecule id="Q99665-2"/>
    <property type="nucleotide sequence ID" value="XM_017001203.2"/>
</dbReference>
<dbReference type="RefSeq" id="XP_047275623.1">
    <molecule id="Q99665-3"/>
    <property type="nucleotide sequence ID" value="XM_047419667.1"/>
</dbReference>
<dbReference type="RefSeq" id="XP_047275624.1">
    <molecule id="Q99665-2"/>
    <property type="nucleotide sequence ID" value="XM_047419668.1"/>
</dbReference>
<dbReference type="RefSeq" id="XP_054192382.1">
    <molecule id="Q99665-1"/>
    <property type="nucleotide sequence ID" value="XM_054336407.1"/>
</dbReference>
<dbReference type="RefSeq" id="XP_054192383.1">
    <molecule id="Q99665-1"/>
    <property type="nucleotide sequence ID" value="XM_054336408.1"/>
</dbReference>
<dbReference type="RefSeq" id="XP_054192384.1">
    <molecule id="Q99665-1"/>
    <property type="nucleotide sequence ID" value="XM_054336409.1"/>
</dbReference>
<dbReference type="PDB" id="8XRP">
    <property type="method" value="EM"/>
    <property type="resolution" value="3.75 A"/>
    <property type="chains" value="C/G/K/O=24-319"/>
</dbReference>
<dbReference type="PDB" id="8YI7">
    <property type="method" value="EM"/>
    <property type="resolution" value="3.57 A"/>
    <property type="chains" value="C=24-319"/>
</dbReference>
<dbReference type="PDBsum" id="8XRP"/>
<dbReference type="PDBsum" id="8YI7"/>
<dbReference type="EMDB" id="EMD-21645"/>
<dbReference type="EMDB" id="EMD-38609"/>
<dbReference type="EMDB" id="EMD-39311"/>
<dbReference type="SMR" id="Q99665"/>
<dbReference type="BioGRID" id="109809">
    <property type="interactions" value="16"/>
</dbReference>
<dbReference type="ComplexPortal" id="CPX-10334">
    <property type="entry name" value="Interleukin-35 receptor ligand type 1 complex"/>
</dbReference>
<dbReference type="ComplexPortal" id="CPX-10335">
    <property type="entry name" value="Interleukin-35 receptor ligand type 2 complex"/>
</dbReference>
<dbReference type="ComplexPortal" id="CPX-10336">
    <property type="entry name" value="Interleukin-35 receptor ligand type 3 complex"/>
</dbReference>
<dbReference type="ComplexPortal" id="CPX-382">
    <property type="entry name" value="Interleukin-12-receptor ligand complex"/>
</dbReference>
<dbReference type="CORUM" id="Q99665"/>
<dbReference type="DIP" id="DIP-6011N"/>
<dbReference type="FunCoup" id="Q99665">
    <property type="interactions" value="434"/>
</dbReference>
<dbReference type="IntAct" id="Q99665">
    <property type="interactions" value="5"/>
</dbReference>
<dbReference type="MINT" id="Q99665"/>
<dbReference type="STRING" id="9606.ENSP00000262345"/>
<dbReference type="GlyCosmos" id="Q99665">
    <property type="glycosylation" value="8 sites, No reported glycans"/>
</dbReference>
<dbReference type="GlyGen" id="Q99665">
    <property type="glycosylation" value="8 sites, 1 N-linked glycan (1 site)"/>
</dbReference>
<dbReference type="iPTMnet" id="Q99665"/>
<dbReference type="PhosphoSitePlus" id="Q99665"/>
<dbReference type="BioMuta" id="IL12RB2"/>
<dbReference type="DMDM" id="12229836"/>
<dbReference type="jPOST" id="Q99665"/>
<dbReference type="MassIVE" id="Q99665"/>
<dbReference type="PaxDb" id="9606-ENSP00000262345"/>
<dbReference type="PeptideAtlas" id="Q99665"/>
<dbReference type="ABCD" id="Q99665">
    <property type="antibodies" value="2 sequenced antibodies"/>
</dbReference>
<dbReference type="Antibodypedia" id="19617">
    <property type="antibodies" value="367 antibodies from 35 providers"/>
</dbReference>
<dbReference type="DNASU" id="3595"/>
<dbReference type="Ensembl" id="ENST00000262345.5">
    <molecule id="Q99665-1"/>
    <property type="protein sequence ID" value="ENSP00000262345.1"/>
    <property type="gene ID" value="ENSG00000081985.14"/>
</dbReference>
<dbReference type="Ensembl" id="ENST00000371000.5">
    <molecule id="Q99665-2"/>
    <property type="protein sequence ID" value="ENSP00000360039.1"/>
    <property type="gene ID" value="ENSG00000081985.14"/>
</dbReference>
<dbReference type="Ensembl" id="ENST00000544434.5">
    <molecule id="Q99665-3"/>
    <property type="protein sequence ID" value="ENSP00000442443.1"/>
    <property type="gene ID" value="ENSG00000081985.14"/>
</dbReference>
<dbReference type="Ensembl" id="ENST00000648487.1">
    <molecule id="Q99665-1"/>
    <property type="protein sequence ID" value="ENSP00000497959.1"/>
    <property type="gene ID" value="ENSG00000081985.14"/>
</dbReference>
<dbReference type="Ensembl" id="ENST00000674203.2">
    <molecule id="Q99665-1"/>
    <property type="protein sequence ID" value="ENSP00000501329.1"/>
    <property type="gene ID" value="ENSG00000081985.14"/>
</dbReference>
<dbReference type="Ensembl" id="ENST00000696757.1">
    <molecule id="Q99665-2"/>
    <property type="protein sequence ID" value="ENSP00000512854.1"/>
    <property type="gene ID" value="ENSG00000081985.14"/>
</dbReference>
<dbReference type="GeneID" id="3595"/>
<dbReference type="KEGG" id="hsa:3595"/>
<dbReference type="MANE-Select" id="ENST00000674203.2">
    <property type="protein sequence ID" value="ENSP00000501329.1"/>
    <property type="RefSeq nucleotide sequence ID" value="NM_001374259.2"/>
    <property type="RefSeq protein sequence ID" value="NP_001361188.1"/>
</dbReference>
<dbReference type="UCSC" id="uc001ddu.3">
    <molecule id="Q99665-1"/>
    <property type="organism name" value="human"/>
</dbReference>
<dbReference type="AGR" id="HGNC:5972"/>
<dbReference type="CTD" id="3595"/>
<dbReference type="DisGeNET" id="3595"/>
<dbReference type="GeneCards" id="IL12RB2"/>
<dbReference type="HGNC" id="HGNC:5972">
    <property type="gene designation" value="IL12RB2"/>
</dbReference>
<dbReference type="HPA" id="ENSG00000081985">
    <property type="expression patterns" value="Tissue enhanced (placenta, skeletal muscle)"/>
</dbReference>
<dbReference type="MalaCards" id="IL12RB2"/>
<dbReference type="MIM" id="601642">
    <property type="type" value="gene"/>
</dbReference>
<dbReference type="neXtProt" id="NX_Q99665"/>
<dbReference type="OpenTargets" id="ENSG00000081985"/>
<dbReference type="PharmGKB" id="PA29787"/>
<dbReference type="VEuPathDB" id="HostDB:ENSG00000081985"/>
<dbReference type="eggNOG" id="ENOG502QRRE">
    <property type="taxonomic scope" value="Eukaryota"/>
</dbReference>
<dbReference type="GeneTree" id="ENSGT00940000159829"/>
<dbReference type="HOGENOM" id="CLU_016653_0_0_1"/>
<dbReference type="InParanoid" id="Q99665"/>
<dbReference type="OMA" id="KWAKECT"/>
<dbReference type="OrthoDB" id="10005435at2759"/>
<dbReference type="PAN-GO" id="Q99665">
    <property type="GO annotations" value="5 GO annotations based on evolutionary models"/>
</dbReference>
<dbReference type="PhylomeDB" id="Q99665"/>
<dbReference type="TreeFam" id="TF338122"/>
<dbReference type="PathwayCommons" id="Q99665"/>
<dbReference type="Reactome" id="R-HSA-8984722">
    <property type="pathway name" value="Interleukin-35 Signalling"/>
</dbReference>
<dbReference type="Reactome" id="R-HSA-9020591">
    <property type="pathway name" value="Interleukin-12 signaling"/>
</dbReference>
<dbReference type="SignaLink" id="Q99665"/>
<dbReference type="SIGNOR" id="Q99665"/>
<dbReference type="BioGRID-ORCS" id="3595">
    <property type="hits" value="33 hits in 1138 CRISPR screens"/>
</dbReference>
<dbReference type="ChiTaRS" id="IL12RB2">
    <property type="organism name" value="human"/>
</dbReference>
<dbReference type="GeneWiki" id="Interleukin_12_receptor,_beta_2_subunit"/>
<dbReference type="GenomeRNAi" id="3595"/>
<dbReference type="Pharos" id="Q99665">
    <property type="development level" value="Tbio"/>
</dbReference>
<dbReference type="PRO" id="PR:Q99665"/>
<dbReference type="Proteomes" id="UP000005640">
    <property type="component" value="Chromosome 1"/>
</dbReference>
<dbReference type="RNAct" id="Q99665">
    <property type="molecule type" value="protein"/>
</dbReference>
<dbReference type="Bgee" id="ENSG00000081985">
    <property type="expression patterns" value="Expressed in hindlimb stylopod muscle and 112 other cell types or tissues"/>
</dbReference>
<dbReference type="ExpressionAtlas" id="Q99665">
    <property type="expression patterns" value="baseline and differential"/>
</dbReference>
<dbReference type="GO" id="GO:0009897">
    <property type="term" value="C:external side of plasma membrane"/>
    <property type="evidence" value="ECO:0000318"/>
    <property type="project" value="GO_Central"/>
</dbReference>
<dbReference type="GO" id="GO:0005886">
    <property type="term" value="C:plasma membrane"/>
    <property type="evidence" value="ECO:0000314"/>
    <property type="project" value="HPA"/>
</dbReference>
<dbReference type="GO" id="GO:0043235">
    <property type="term" value="C:receptor complex"/>
    <property type="evidence" value="ECO:0000318"/>
    <property type="project" value="GO_Central"/>
</dbReference>
<dbReference type="GO" id="GO:0015026">
    <property type="term" value="F:coreceptor activity"/>
    <property type="evidence" value="ECO:0000314"/>
    <property type="project" value="UniProt"/>
</dbReference>
<dbReference type="GO" id="GO:0019955">
    <property type="term" value="F:cytokine binding"/>
    <property type="evidence" value="ECO:0000318"/>
    <property type="project" value="GO_Central"/>
</dbReference>
<dbReference type="GO" id="GO:0004896">
    <property type="term" value="F:cytokine receptor activity"/>
    <property type="evidence" value="ECO:0000318"/>
    <property type="project" value="GO_Central"/>
</dbReference>
<dbReference type="GO" id="GO:0019901">
    <property type="term" value="F:protein kinase binding"/>
    <property type="evidence" value="ECO:0007669"/>
    <property type="project" value="Ensembl"/>
</dbReference>
<dbReference type="GO" id="GO:0007166">
    <property type="term" value="P:cell surface receptor signaling pathway"/>
    <property type="evidence" value="ECO:0000304"/>
    <property type="project" value="ProtInc"/>
</dbReference>
<dbReference type="GO" id="GO:0019221">
    <property type="term" value="P:cytokine-mediated signaling pathway"/>
    <property type="evidence" value="ECO:0000318"/>
    <property type="project" value="GO_Central"/>
</dbReference>
<dbReference type="GO" id="GO:0035722">
    <property type="term" value="P:interleukin-12-mediated signaling pathway"/>
    <property type="evidence" value="ECO:0000314"/>
    <property type="project" value="UniProt"/>
</dbReference>
<dbReference type="GO" id="GO:0008284">
    <property type="term" value="P:positive regulation of cell population proliferation"/>
    <property type="evidence" value="ECO:0000318"/>
    <property type="project" value="GO_Central"/>
</dbReference>
<dbReference type="GO" id="GO:0032729">
    <property type="term" value="P:positive regulation of type II interferon production"/>
    <property type="evidence" value="ECO:0000314"/>
    <property type="project" value="BHF-UCL"/>
</dbReference>
<dbReference type="GO" id="GO:0032496">
    <property type="term" value="P:response to lipopolysaccharide"/>
    <property type="evidence" value="ECO:0007669"/>
    <property type="project" value="Ensembl"/>
</dbReference>
<dbReference type="CDD" id="cd00063">
    <property type="entry name" value="FN3"/>
    <property type="match status" value="3"/>
</dbReference>
<dbReference type="FunFam" id="2.60.40.10:FF:000789">
    <property type="entry name" value="Interleukin 12 receptor subunit beta 2"/>
    <property type="match status" value="1"/>
</dbReference>
<dbReference type="FunFam" id="2.60.40.10:FF:000875">
    <property type="entry name" value="Interleukin 12 receptor subunit beta 2"/>
    <property type="match status" value="1"/>
</dbReference>
<dbReference type="FunFam" id="2.60.40.10:FF:001079">
    <property type="entry name" value="Interleukin 12 receptor subunit beta 2"/>
    <property type="match status" value="1"/>
</dbReference>
<dbReference type="FunFam" id="2.60.40.10:FF:000862">
    <property type="entry name" value="interleukin-12 receptor subunit beta-2 isoform X1"/>
    <property type="match status" value="1"/>
</dbReference>
<dbReference type="FunFam" id="2.60.40.10:FF:001068">
    <property type="entry name" value="interleukin-12 receptor subunit beta-2 isoform X1"/>
    <property type="match status" value="1"/>
</dbReference>
<dbReference type="Gene3D" id="2.60.40.10">
    <property type="entry name" value="Immunoglobulins"/>
    <property type="match status" value="5"/>
</dbReference>
<dbReference type="InterPro" id="IPR003961">
    <property type="entry name" value="FN3_dom"/>
</dbReference>
<dbReference type="InterPro" id="IPR036116">
    <property type="entry name" value="FN3_sf"/>
</dbReference>
<dbReference type="InterPro" id="IPR003529">
    <property type="entry name" value="Hematopoietin_rcpt_Gp130_CS"/>
</dbReference>
<dbReference type="InterPro" id="IPR013783">
    <property type="entry name" value="Ig-like_fold"/>
</dbReference>
<dbReference type="InterPro" id="IPR010457">
    <property type="entry name" value="IgC2-like_lig-bd"/>
</dbReference>
<dbReference type="InterPro" id="IPR052672">
    <property type="entry name" value="Type1_Cytokine_Rcpt_Type2"/>
</dbReference>
<dbReference type="PANTHER" id="PTHR48423">
    <property type="entry name" value="INTERLEUKIN-27 RECEPTOR SUBUNIT ALPHA"/>
    <property type="match status" value="1"/>
</dbReference>
<dbReference type="PANTHER" id="PTHR48423:SF1">
    <property type="entry name" value="INTERLEUKIN-27 RECEPTOR SUBUNIT ALPHA"/>
    <property type="match status" value="1"/>
</dbReference>
<dbReference type="Pfam" id="PF00041">
    <property type="entry name" value="fn3"/>
    <property type="match status" value="2"/>
</dbReference>
<dbReference type="Pfam" id="PF06328">
    <property type="entry name" value="Lep_receptor_Ig"/>
    <property type="match status" value="1"/>
</dbReference>
<dbReference type="SMART" id="SM00060">
    <property type="entry name" value="FN3"/>
    <property type="match status" value="4"/>
</dbReference>
<dbReference type="SUPFAM" id="SSF49265">
    <property type="entry name" value="Fibronectin type III"/>
    <property type="match status" value="4"/>
</dbReference>
<dbReference type="PROSITE" id="PS50853">
    <property type="entry name" value="FN3"/>
    <property type="match status" value="5"/>
</dbReference>
<dbReference type="PROSITE" id="PS01353">
    <property type="entry name" value="HEMATOPO_REC_L_F2"/>
    <property type="match status" value="1"/>
</dbReference>
<accession>Q99665</accession>
<accession>B1AN98</accession>
<accession>B7ZKL9</accession>
<accession>F5H7L6</accession>
<accession>Q2M3V3</accession>